<proteinExistence type="inferred from homology"/>
<dbReference type="EMBL" id="AJ421723">
    <property type="protein sequence ID" value="CAD18912.1"/>
    <property type="molecule type" value="Genomic_DNA"/>
</dbReference>
<dbReference type="EMBL" id="AY075116">
    <property type="protein sequence ID" value="AAL79367.1"/>
    <property type="molecule type" value="Genomic_DNA"/>
</dbReference>
<dbReference type="RefSeq" id="NP_536762.1">
    <property type="nucleotide sequence ID" value="NC_003314.1"/>
</dbReference>
<dbReference type="SMR" id="Q8W9N2"/>
<dbReference type="GeneID" id="804496"/>
<dbReference type="CTD" id="4509"/>
<dbReference type="GO" id="GO:0031966">
    <property type="term" value="C:mitochondrial membrane"/>
    <property type="evidence" value="ECO:0007669"/>
    <property type="project" value="UniProtKB-SubCell"/>
</dbReference>
<dbReference type="GO" id="GO:0045259">
    <property type="term" value="C:proton-transporting ATP synthase complex"/>
    <property type="evidence" value="ECO:0000250"/>
    <property type="project" value="UniProtKB"/>
</dbReference>
<dbReference type="GO" id="GO:0015078">
    <property type="term" value="F:proton transmembrane transporter activity"/>
    <property type="evidence" value="ECO:0007669"/>
    <property type="project" value="InterPro"/>
</dbReference>
<dbReference type="GO" id="GO:0015986">
    <property type="term" value="P:proton motive force-driven ATP synthesis"/>
    <property type="evidence" value="ECO:0007669"/>
    <property type="project" value="InterPro"/>
</dbReference>
<dbReference type="InterPro" id="IPR039017">
    <property type="entry name" value="ATP8_mammal"/>
</dbReference>
<dbReference type="InterPro" id="IPR001421">
    <property type="entry name" value="ATP8_metazoa"/>
</dbReference>
<dbReference type="PANTHER" id="PTHR13722">
    <property type="entry name" value="ATP SYNTHASE PROTEIN 8"/>
    <property type="match status" value="1"/>
</dbReference>
<dbReference type="PANTHER" id="PTHR13722:SF0">
    <property type="entry name" value="ATP SYNTHASE PROTEIN 8"/>
    <property type="match status" value="1"/>
</dbReference>
<dbReference type="Pfam" id="PF00895">
    <property type="entry name" value="ATP-synt_8"/>
    <property type="match status" value="1"/>
</dbReference>
<evidence type="ECO:0000250" key="1">
    <source>
        <dbReference type="UniProtKB" id="P03928"/>
    </source>
</evidence>
<evidence type="ECO:0000250" key="2">
    <source>
        <dbReference type="UniProtKB" id="P03930"/>
    </source>
</evidence>
<evidence type="ECO:0000250" key="3">
    <source>
        <dbReference type="UniProtKB" id="P19483"/>
    </source>
</evidence>
<evidence type="ECO:0000255" key="4"/>
<evidence type="ECO:0000305" key="5"/>
<protein>
    <recommendedName>
        <fullName evidence="1">ATP synthase F(0) complex subunit 8</fullName>
    </recommendedName>
    <alternativeName>
        <fullName>A6L</fullName>
    </alternativeName>
    <alternativeName>
        <fullName>F-ATPase subunit 8</fullName>
    </alternativeName>
</protein>
<gene>
    <name evidence="1" type="primary">MT-ATP8</name>
    <name type="synonym">ATP8</name>
    <name type="synonym">ATPASE8</name>
    <name type="synonym">MTATP8</name>
</gene>
<accession>Q8W9N2</accession>
<feature type="chain" id="PRO_0000195527" description="ATP synthase F(0) complex subunit 8">
    <location>
        <begin position="1"/>
        <end position="67"/>
    </location>
</feature>
<feature type="transmembrane region" description="Helical" evidence="4">
    <location>
        <begin position="8"/>
        <end position="24"/>
    </location>
</feature>
<feature type="modified residue" description="N6-acetyllysine; alternate" evidence="2">
    <location>
        <position position="54"/>
    </location>
</feature>
<feature type="modified residue" description="N6-succinyllysine; alternate" evidence="2">
    <location>
        <position position="54"/>
    </location>
</feature>
<feature type="modified residue" description="N6-acetyllysine" evidence="2">
    <location>
        <position position="57"/>
    </location>
</feature>
<comment type="function">
    <text evidence="1 3">Subunit 8, of the mitochondrial membrane ATP synthase complex (F(1)F(0) ATP synthase or Complex V) that produces ATP from ADP in the presence of a proton gradient across the membrane which is generated by electron transport complexes of the respiratory chain. ATP synthase complex consist of a soluble F(1) head domain - the catalytic core - and a membrane F(1) domain - the membrane proton channel. These two domains are linked by a central stalk rotating inside the F(1) region and a stationary peripheral stalk. During catalysis, ATP synthesis in the catalytic domain of F(1) is coupled via a rotary mechanism of the central stalk subunits to proton translocation (By similarity). In vivo, can only synthesize ATP although its ATP hydrolase activity can be activated artificially in vitro (By similarity). Part of the complex F(0) domain (By similarity).</text>
</comment>
<comment type="subunit">
    <text evidence="1">Component of the ATP synthase complex composed at least of ATP5F1A/subunit alpha, ATP5F1B/subunit beta, ATP5MC1/subunit c (homooctomer), MT-ATP6/subunit a, MT-ATP8/subunit 8, ATP5ME/subunit e, ATP5MF/subunit f, ATP5MG/subunit g, ATP5MK/subunit k, ATP5MJ/subunit j, ATP5F1C/subunit gamma, ATP5F1D/subunit delta, ATP5F1E/subunit epsilon, ATP5PF/subunit F6, ATP5PB/subunit b, ATP5PD/subunit d, ATP5PO/subunit OSCP. ATP synthase complex consists of a soluble F(1) head domain (subunits alpha(3) and beta(3)) - the catalytic core - and a membrane F(0) domain - the membrane proton channel (subunits c, a, 8, e, f, g, k and j). These two domains are linked by a central stalk (subunits gamma, delta, and epsilon) rotating inside the F1 region and a stationary peripheral stalk (subunits F6, b, d, and OSCP). Interacts with PRICKLE3.</text>
</comment>
<comment type="subcellular location">
    <subcellularLocation>
        <location>Mitochondrion membrane</location>
        <topology>Single-pass membrane protein</topology>
    </subcellularLocation>
</comment>
<comment type="similarity">
    <text evidence="5">Belongs to the ATPase protein 8 family.</text>
</comment>
<geneLocation type="mitochondrion"/>
<name>ATP8_DUGDU</name>
<organism>
    <name type="scientific">Dugong dugon</name>
    <name type="common">Dugong</name>
    <name type="synonym">Trichechus dugon</name>
    <dbReference type="NCBI Taxonomy" id="29137"/>
    <lineage>
        <taxon>Eukaryota</taxon>
        <taxon>Metazoa</taxon>
        <taxon>Chordata</taxon>
        <taxon>Craniata</taxon>
        <taxon>Vertebrata</taxon>
        <taxon>Euteleostomi</taxon>
        <taxon>Mammalia</taxon>
        <taxon>Eutheria</taxon>
        <taxon>Afrotheria</taxon>
        <taxon>Sirenia</taxon>
        <taxon>Dugongidae</taxon>
        <taxon>Dugong</taxon>
    </lineage>
</organism>
<keyword id="KW-0007">Acetylation</keyword>
<keyword id="KW-0066">ATP synthesis</keyword>
<keyword id="KW-0138">CF(0)</keyword>
<keyword id="KW-0375">Hydrogen ion transport</keyword>
<keyword id="KW-0406">Ion transport</keyword>
<keyword id="KW-0472">Membrane</keyword>
<keyword id="KW-0496">Mitochondrion</keyword>
<keyword id="KW-0812">Transmembrane</keyword>
<keyword id="KW-1133">Transmembrane helix</keyword>
<keyword id="KW-0813">Transport</keyword>
<sequence>MPQLDTTTWFITILSMLITLFILFQTKLLNYTYPLNALPISPNVTNHLTPWKMKWTKTYLPLSLPLQ</sequence>
<reference key="1">
    <citation type="journal article" date="2002" name="Proc. Natl. Acad. Sci. U.S.A.">
        <title>Mammalian mitogenomic relationships and the root of the eutherian tree.</title>
        <authorList>
            <person name="Arnason U."/>
            <person name="Adegoke J.A."/>
            <person name="Bodin K."/>
            <person name="Born E.W."/>
            <person name="Esa Y.B."/>
            <person name="Gullberg A."/>
            <person name="Nilsson M."/>
            <person name="Short R.V."/>
            <person name="Xu X."/>
            <person name="Janke A."/>
        </authorList>
    </citation>
    <scope>NUCLEOTIDE SEQUENCE [GENOMIC DNA]</scope>
</reference>
<reference key="2">
    <citation type="submission" date="2002-01" db="EMBL/GenBank/DDBJ databases">
        <title>Complete mitochondrial genome of a dugong.</title>
        <authorList>
            <person name="McLenachan P.A."/>
            <person name="Phillips M.J."/>
            <person name="Penny D."/>
        </authorList>
    </citation>
    <scope>NUCLEOTIDE SEQUENCE [GENOMIC DNA]</scope>
</reference>